<proteinExistence type="inferred from homology"/>
<dbReference type="EMBL" id="AE005674">
    <property type="protein sequence ID" value="AAN45429.1"/>
    <property type="molecule type" value="Genomic_DNA"/>
</dbReference>
<dbReference type="EMBL" id="AE014073">
    <property type="protein sequence ID" value="AAP18771.1"/>
    <property type="molecule type" value="Genomic_DNA"/>
</dbReference>
<dbReference type="RefSeq" id="NP_709722.1">
    <property type="nucleotide sequence ID" value="NC_004337.2"/>
</dbReference>
<dbReference type="RefSeq" id="WP_001045689.1">
    <property type="nucleotide sequence ID" value="NZ_WPGW01000012.1"/>
</dbReference>
<dbReference type="SMR" id="P0AG79"/>
<dbReference type="STRING" id="198214.SF3995"/>
<dbReference type="PaxDb" id="198214-SF3995"/>
<dbReference type="GeneID" id="1025163"/>
<dbReference type="GeneID" id="93777981"/>
<dbReference type="KEGG" id="sfl:SF3995"/>
<dbReference type="KEGG" id="sfx:S3752"/>
<dbReference type="PATRIC" id="fig|198214.7.peg.4708"/>
<dbReference type="HOGENOM" id="CLU_055615_0_1_6"/>
<dbReference type="Proteomes" id="UP000001006">
    <property type="component" value="Chromosome"/>
</dbReference>
<dbReference type="Proteomes" id="UP000002673">
    <property type="component" value="Chromosome"/>
</dbReference>
<dbReference type="GO" id="GO:0042597">
    <property type="term" value="C:periplasmic space"/>
    <property type="evidence" value="ECO:0007669"/>
    <property type="project" value="UniProtKB-SubCell"/>
</dbReference>
<dbReference type="GO" id="GO:0140104">
    <property type="term" value="F:molecular carrier activity"/>
    <property type="evidence" value="ECO:0007669"/>
    <property type="project" value="InterPro"/>
</dbReference>
<dbReference type="GO" id="GO:1901681">
    <property type="term" value="F:sulfur compound binding"/>
    <property type="evidence" value="ECO:0007669"/>
    <property type="project" value="InterPro"/>
</dbReference>
<dbReference type="GO" id="GO:1902358">
    <property type="term" value="P:sulfate transmembrane transport"/>
    <property type="evidence" value="ECO:0007669"/>
    <property type="project" value="InterPro"/>
</dbReference>
<dbReference type="CDD" id="cd01005">
    <property type="entry name" value="PBP2_CysP"/>
    <property type="match status" value="1"/>
</dbReference>
<dbReference type="Gene3D" id="3.40.190.10">
    <property type="entry name" value="Periplasmic binding protein-like II"/>
    <property type="match status" value="2"/>
</dbReference>
<dbReference type="InterPro" id="IPR000957">
    <property type="entry name" value="Sulphate/thiosulphate-bd_CS"/>
</dbReference>
<dbReference type="InterPro" id="IPR034408">
    <property type="entry name" value="Sulphate/thiosulphate_BS"/>
</dbReference>
<dbReference type="InterPro" id="IPR005669">
    <property type="entry name" value="Thiosulph/SO4-bd"/>
</dbReference>
<dbReference type="NCBIfam" id="TIGR00971">
    <property type="entry name" value="3a0106s03"/>
    <property type="match status" value="1"/>
</dbReference>
<dbReference type="NCBIfam" id="NF008022">
    <property type="entry name" value="PRK10752.1"/>
    <property type="match status" value="1"/>
</dbReference>
<dbReference type="NCBIfam" id="NF008106">
    <property type="entry name" value="PRK10852.1"/>
    <property type="match status" value="1"/>
</dbReference>
<dbReference type="PANTHER" id="PTHR30368">
    <property type="entry name" value="SULFATE-BINDING PROTEIN"/>
    <property type="match status" value="1"/>
</dbReference>
<dbReference type="PANTHER" id="PTHR30368:SF2">
    <property type="entry name" value="SULFATE-BINDING PROTEIN"/>
    <property type="match status" value="1"/>
</dbReference>
<dbReference type="Pfam" id="PF13531">
    <property type="entry name" value="SBP_bac_11"/>
    <property type="match status" value="1"/>
</dbReference>
<dbReference type="SUPFAM" id="SSF53850">
    <property type="entry name" value="Periplasmic binding protein-like II"/>
    <property type="match status" value="1"/>
</dbReference>
<dbReference type="PROSITE" id="PS00401">
    <property type="entry name" value="PROK_SULFATE_BIND_1"/>
    <property type="match status" value="1"/>
</dbReference>
<dbReference type="PROSITE" id="PS00757">
    <property type="entry name" value="PROK_SULFATE_BIND_2"/>
    <property type="match status" value="1"/>
</dbReference>
<sequence length="329" mass="36659">MNKWGVGLTFLLAATSVMAKDIQLLNVSYDPTRELYEQYNKAFSAHWKQQTGDNVVIRQSHGGSGKQATSVINGIEADVVTLALAYDVDAIAERGRIDKEWIKRLPDNSAPYTSTIVFLVRKGNPKQIHDWNDLIKPGVSVITPNPKSSGGARWNYLAAWGYALHHNNNDQAKAQDFVRALYKNVEVLDSGARGSTNTFVERGIGDVLIAWENEALLAANELGKDKFEIVTPSESILAEPTVSVVDKVVEKKGTKEVAEAYLKYLYSPEGQEIAAKNYYRPRDAEVAKKYENAFPKLKLFTIDEEFGGWTKAQKEHFANGGTFDQISKR</sequence>
<name>SUBI_SHIFL</name>
<feature type="signal peptide" evidence="1">
    <location>
        <begin position="1"/>
        <end position="19"/>
    </location>
</feature>
<feature type="chain" id="PRO_0000045265" description="Sulfate-binding protein">
    <location>
        <begin position="20"/>
        <end position="329"/>
    </location>
</feature>
<keyword id="KW-0574">Periplasm</keyword>
<keyword id="KW-1185">Reference proteome</keyword>
<keyword id="KW-0732">Signal</keyword>
<keyword id="KW-0764">Sulfate transport</keyword>
<keyword id="KW-0813">Transport</keyword>
<comment type="function">
    <text evidence="1">This protein specifically binds sulfate and is involved in its transmembrane transport.</text>
</comment>
<comment type="subcellular location">
    <subcellularLocation>
        <location evidence="1">Periplasm</location>
    </subcellularLocation>
</comment>
<comment type="similarity">
    <text evidence="2">Belongs to the prokaryotic sulfate-binding protein family.</text>
</comment>
<accession>P0AG79</accession>
<accession>P06997</accession>
<organism>
    <name type="scientific">Shigella flexneri</name>
    <dbReference type="NCBI Taxonomy" id="623"/>
    <lineage>
        <taxon>Bacteria</taxon>
        <taxon>Pseudomonadati</taxon>
        <taxon>Pseudomonadota</taxon>
        <taxon>Gammaproteobacteria</taxon>
        <taxon>Enterobacterales</taxon>
        <taxon>Enterobacteriaceae</taxon>
        <taxon>Shigella</taxon>
    </lineage>
</organism>
<gene>
    <name type="primary">sbp</name>
    <name type="ordered locus">SF3995</name>
    <name type="ordered locus">S3752</name>
</gene>
<evidence type="ECO:0000250" key="1"/>
<evidence type="ECO:0000305" key="2"/>
<reference key="1">
    <citation type="journal article" date="2002" name="Nucleic Acids Res.">
        <title>Genome sequence of Shigella flexneri 2a: insights into pathogenicity through comparison with genomes of Escherichia coli K12 and O157.</title>
        <authorList>
            <person name="Jin Q."/>
            <person name="Yuan Z."/>
            <person name="Xu J."/>
            <person name="Wang Y."/>
            <person name="Shen Y."/>
            <person name="Lu W."/>
            <person name="Wang J."/>
            <person name="Liu H."/>
            <person name="Yang J."/>
            <person name="Yang F."/>
            <person name="Zhang X."/>
            <person name="Zhang J."/>
            <person name="Yang G."/>
            <person name="Wu H."/>
            <person name="Qu D."/>
            <person name="Dong J."/>
            <person name="Sun L."/>
            <person name="Xue Y."/>
            <person name="Zhao A."/>
            <person name="Gao Y."/>
            <person name="Zhu J."/>
            <person name="Kan B."/>
            <person name="Ding K."/>
            <person name="Chen S."/>
            <person name="Cheng H."/>
            <person name="Yao Z."/>
            <person name="He B."/>
            <person name="Chen R."/>
            <person name="Ma D."/>
            <person name="Qiang B."/>
            <person name="Wen Y."/>
            <person name="Hou Y."/>
            <person name="Yu J."/>
        </authorList>
    </citation>
    <scope>NUCLEOTIDE SEQUENCE [LARGE SCALE GENOMIC DNA]</scope>
    <source>
        <strain>301 / Serotype 2a</strain>
    </source>
</reference>
<reference key="2">
    <citation type="journal article" date="2003" name="Infect. Immun.">
        <title>Complete genome sequence and comparative genomics of Shigella flexneri serotype 2a strain 2457T.</title>
        <authorList>
            <person name="Wei J."/>
            <person name="Goldberg M.B."/>
            <person name="Burland V."/>
            <person name="Venkatesan M.M."/>
            <person name="Deng W."/>
            <person name="Fournier G."/>
            <person name="Mayhew G.F."/>
            <person name="Plunkett G. III"/>
            <person name="Rose D.J."/>
            <person name="Darling A."/>
            <person name="Mau B."/>
            <person name="Perna N.T."/>
            <person name="Payne S.M."/>
            <person name="Runyen-Janecky L.J."/>
            <person name="Zhou S."/>
            <person name="Schwartz D.C."/>
            <person name="Blattner F.R."/>
        </authorList>
    </citation>
    <scope>NUCLEOTIDE SEQUENCE [LARGE SCALE GENOMIC DNA]</scope>
    <source>
        <strain>ATCC 700930 / 2457T / Serotype 2a</strain>
    </source>
</reference>
<protein>
    <recommendedName>
        <fullName>Sulfate-binding protein</fullName>
    </recommendedName>
    <alternativeName>
        <fullName>Sulfate starvation-induced protein 2</fullName>
        <shortName>SSI2</shortName>
    </alternativeName>
</protein>